<reference key="1">
    <citation type="journal article" date="1996" name="Science">
        <title>Complete genome sequence of the methanogenic archaeon, Methanococcus jannaschii.</title>
        <authorList>
            <person name="Bult C.J."/>
            <person name="White O."/>
            <person name="Olsen G.J."/>
            <person name="Zhou L."/>
            <person name="Fleischmann R.D."/>
            <person name="Sutton G.G."/>
            <person name="Blake J.A."/>
            <person name="FitzGerald L.M."/>
            <person name="Clayton R.A."/>
            <person name="Gocayne J.D."/>
            <person name="Kerlavage A.R."/>
            <person name="Dougherty B.A."/>
            <person name="Tomb J.-F."/>
            <person name="Adams M.D."/>
            <person name="Reich C.I."/>
            <person name="Overbeek R."/>
            <person name="Kirkness E.F."/>
            <person name="Weinstock K.G."/>
            <person name="Merrick J.M."/>
            <person name="Glodek A."/>
            <person name="Scott J.L."/>
            <person name="Geoghagen N.S.M."/>
            <person name="Weidman J.F."/>
            <person name="Fuhrmann J.L."/>
            <person name="Nguyen D."/>
            <person name="Utterback T.R."/>
            <person name="Kelley J.M."/>
            <person name="Peterson J.D."/>
            <person name="Sadow P.W."/>
            <person name="Hanna M.C."/>
            <person name="Cotton M.D."/>
            <person name="Roberts K.M."/>
            <person name="Hurst M.A."/>
            <person name="Kaine B.P."/>
            <person name="Borodovsky M."/>
            <person name="Klenk H.-P."/>
            <person name="Fraser C.M."/>
            <person name="Smith H.O."/>
            <person name="Woese C.R."/>
            <person name="Venter J.C."/>
        </authorList>
    </citation>
    <scope>NUCLEOTIDE SEQUENCE [LARGE SCALE GENOMIC DNA]</scope>
    <source>
        <strain>ATCC 43067 / DSM 2661 / JAL-1 / JCM 10045 / NBRC 100440</strain>
    </source>
</reference>
<sequence length="241" mass="27274">MTFYFYFVINMEKVAIYIIGDIVLAENTGKALKKWRNLFNIQQIELAKYLNVSPSVISDYEVGRRKNPGVNIIKKYVLALIEIDKEKGGQTIKALKRILDKSPSMKAILSIKEYENPITLNEFVNIIDGEIAVGDNSDTPIYGHTVVDSIKAILEMTGDDFYHLYGWTTERALIFTNVSTGRSPMVAVRVSIMKPRVVVLQGINKDKIDSLALKLAEIDNIPLITTHLDTKELIKRLNEIK</sequence>
<evidence type="ECO:0000255" key="1">
    <source>
        <dbReference type="PROSITE-ProRule" id="PRU00257"/>
    </source>
</evidence>
<keyword id="KW-0238">DNA-binding</keyword>
<keyword id="KW-1185">Reference proteome</keyword>
<keyword id="KW-0804">Transcription</keyword>
<keyword id="KW-0805">Transcription regulation</keyword>
<protein>
    <recommendedName>
        <fullName>Uncharacterized HTH-type transcriptional regulator MJ1545</fullName>
    </recommendedName>
</protein>
<proteinExistence type="predicted"/>
<accession>Q58940</accession>
<dbReference type="EMBL" id="L77117">
    <property type="protein sequence ID" value="AAB99563.1"/>
    <property type="molecule type" value="Genomic_DNA"/>
</dbReference>
<dbReference type="PIR" id="H64492">
    <property type="entry name" value="H64492"/>
</dbReference>
<dbReference type="SMR" id="Q58940"/>
<dbReference type="FunCoup" id="Q58940">
    <property type="interactions" value="2"/>
</dbReference>
<dbReference type="STRING" id="243232.MJ_1545"/>
<dbReference type="PaxDb" id="243232-MJ_1545"/>
<dbReference type="EnsemblBacteria" id="AAB99563">
    <property type="protein sequence ID" value="AAB99563"/>
    <property type="gene ID" value="MJ_1545"/>
</dbReference>
<dbReference type="KEGG" id="mja:MJ_1545"/>
<dbReference type="eggNOG" id="arCOG04060">
    <property type="taxonomic scope" value="Archaea"/>
</dbReference>
<dbReference type="HOGENOM" id="CLU_077869_0_0_2"/>
<dbReference type="InParanoid" id="Q58940"/>
<dbReference type="PhylomeDB" id="Q58940"/>
<dbReference type="Proteomes" id="UP000000805">
    <property type="component" value="Chromosome"/>
</dbReference>
<dbReference type="GO" id="GO:0003677">
    <property type="term" value="F:DNA binding"/>
    <property type="evidence" value="ECO:0007669"/>
    <property type="project" value="UniProtKB-KW"/>
</dbReference>
<dbReference type="CDD" id="cd00093">
    <property type="entry name" value="HTH_XRE"/>
    <property type="match status" value="1"/>
</dbReference>
<dbReference type="Gene3D" id="1.10.260.40">
    <property type="entry name" value="lambda repressor-like DNA-binding domains"/>
    <property type="match status" value="1"/>
</dbReference>
<dbReference type="InterPro" id="IPR001387">
    <property type="entry name" value="Cro/C1-type_HTH"/>
</dbReference>
<dbReference type="InterPro" id="IPR010982">
    <property type="entry name" value="Lambda_DNA-bd_dom_sf"/>
</dbReference>
<dbReference type="InterPro" id="IPR017271">
    <property type="entry name" value="Tscrpt_reg_HTH_MJ1545_prd"/>
</dbReference>
<dbReference type="Pfam" id="PF01381">
    <property type="entry name" value="HTH_3"/>
    <property type="match status" value="1"/>
</dbReference>
<dbReference type="PIRSF" id="PIRSF037724">
    <property type="entry name" value="TF_HTH_MJ1545_prd"/>
    <property type="match status" value="1"/>
</dbReference>
<dbReference type="SMART" id="SM00530">
    <property type="entry name" value="HTH_XRE"/>
    <property type="match status" value="1"/>
</dbReference>
<dbReference type="SUPFAM" id="SSF47413">
    <property type="entry name" value="lambda repressor-like DNA-binding domains"/>
    <property type="match status" value="1"/>
</dbReference>
<dbReference type="PROSITE" id="PS50943">
    <property type="entry name" value="HTH_CROC1"/>
    <property type="match status" value="1"/>
</dbReference>
<feature type="chain" id="PRO_0000149793" description="Uncharacterized HTH-type transcriptional regulator MJ1545">
    <location>
        <begin position="1"/>
        <end position="241"/>
    </location>
</feature>
<feature type="domain" description="HTH cro/C1-type" evidence="1">
    <location>
        <begin position="32"/>
        <end position="86"/>
    </location>
</feature>
<feature type="DNA-binding region" description="H-T-H motif" evidence="1">
    <location>
        <begin position="43"/>
        <end position="62"/>
    </location>
</feature>
<organism>
    <name type="scientific">Methanocaldococcus jannaschii (strain ATCC 43067 / DSM 2661 / JAL-1 / JCM 10045 / NBRC 100440)</name>
    <name type="common">Methanococcus jannaschii</name>
    <dbReference type="NCBI Taxonomy" id="243232"/>
    <lineage>
        <taxon>Archaea</taxon>
        <taxon>Methanobacteriati</taxon>
        <taxon>Methanobacteriota</taxon>
        <taxon>Methanomada group</taxon>
        <taxon>Methanococci</taxon>
        <taxon>Methanococcales</taxon>
        <taxon>Methanocaldococcaceae</taxon>
        <taxon>Methanocaldococcus</taxon>
    </lineage>
</organism>
<name>Y1545_METJA</name>
<gene>
    <name type="ordered locus">MJ1545</name>
</gene>